<gene>
    <name type="ordered locus">PputW619_0896</name>
</gene>
<proteinExistence type="inferred from homology"/>
<reference key="1">
    <citation type="submission" date="2008-02" db="EMBL/GenBank/DDBJ databases">
        <title>Complete sequence of Pseudomonas putida W619.</title>
        <authorList>
            <person name="Copeland A."/>
            <person name="Lucas S."/>
            <person name="Lapidus A."/>
            <person name="Barry K."/>
            <person name="Detter J.C."/>
            <person name="Glavina del Rio T."/>
            <person name="Dalin E."/>
            <person name="Tice H."/>
            <person name="Pitluck S."/>
            <person name="Chain P."/>
            <person name="Malfatti S."/>
            <person name="Shin M."/>
            <person name="Vergez L."/>
            <person name="Schmutz J."/>
            <person name="Larimer F."/>
            <person name="Land M."/>
            <person name="Hauser L."/>
            <person name="Kyrpides N."/>
            <person name="Kim E."/>
            <person name="Taghavi S."/>
            <person name="Vangronsveld D."/>
            <person name="van der Lelie D."/>
            <person name="Richardson P."/>
        </authorList>
    </citation>
    <scope>NUCLEOTIDE SEQUENCE [LARGE SCALE GENOMIC DNA]</scope>
    <source>
        <strain>W619</strain>
    </source>
</reference>
<dbReference type="EMBL" id="CP000949">
    <property type="protein sequence ID" value="ACA71401.1"/>
    <property type="molecule type" value="Genomic_DNA"/>
</dbReference>
<dbReference type="SMR" id="B1J173"/>
<dbReference type="STRING" id="390235.PputW619_0896"/>
<dbReference type="KEGG" id="ppw:PputW619_0896"/>
<dbReference type="eggNOG" id="COG3022">
    <property type="taxonomic scope" value="Bacteria"/>
</dbReference>
<dbReference type="HOGENOM" id="CLU_061989_0_0_6"/>
<dbReference type="OrthoDB" id="9777133at2"/>
<dbReference type="GO" id="GO:0005829">
    <property type="term" value="C:cytosol"/>
    <property type="evidence" value="ECO:0007669"/>
    <property type="project" value="TreeGrafter"/>
</dbReference>
<dbReference type="GO" id="GO:0033194">
    <property type="term" value="P:response to hydroperoxide"/>
    <property type="evidence" value="ECO:0007669"/>
    <property type="project" value="TreeGrafter"/>
</dbReference>
<dbReference type="HAMAP" id="MF_00652">
    <property type="entry name" value="UPF0246"/>
    <property type="match status" value="1"/>
</dbReference>
<dbReference type="InterPro" id="IPR005583">
    <property type="entry name" value="YaaA"/>
</dbReference>
<dbReference type="NCBIfam" id="NF002541">
    <property type="entry name" value="PRK02101.1-1"/>
    <property type="match status" value="1"/>
</dbReference>
<dbReference type="NCBIfam" id="NF002542">
    <property type="entry name" value="PRK02101.1-3"/>
    <property type="match status" value="1"/>
</dbReference>
<dbReference type="PANTHER" id="PTHR30283:SF4">
    <property type="entry name" value="PEROXIDE STRESS RESISTANCE PROTEIN YAAA"/>
    <property type="match status" value="1"/>
</dbReference>
<dbReference type="PANTHER" id="PTHR30283">
    <property type="entry name" value="PEROXIDE STRESS RESPONSE PROTEIN YAAA"/>
    <property type="match status" value="1"/>
</dbReference>
<dbReference type="Pfam" id="PF03883">
    <property type="entry name" value="H2O2_YaaD"/>
    <property type="match status" value="1"/>
</dbReference>
<organism>
    <name type="scientific">Pseudomonas putida (strain W619)</name>
    <dbReference type="NCBI Taxonomy" id="390235"/>
    <lineage>
        <taxon>Bacteria</taxon>
        <taxon>Pseudomonadati</taxon>
        <taxon>Pseudomonadota</taxon>
        <taxon>Gammaproteobacteria</taxon>
        <taxon>Pseudomonadales</taxon>
        <taxon>Pseudomonadaceae</taxon>
        <taxon>Pseudomonas</taxon>
    </lineage>
</organism>
<accession>B1J173</accession>
<feature type="chain" id="PRO_1000131134" description="UPF0246 protein PputW619_0896">
    <location>
        <begin position="1"/>
        <end position="259"/>
    </location>
</feature>
<evidence type="ECO:0000255" key="1">
    <source>
        <dbReference type="HAMAP-Rule" id="MF_00652"/>
    </source>
</evidence>
<name>Y896_PSEPW</name>
<protein>
    <recommendedName>
        <fullName evidence="1">UPF0246 protein PputW619_0896</fullName>
    </recommendedName>
</protein>
<comment type="similarity">
    <text evidence="1">Belongs to the UPF0246 family.</text>
</comment>
<sequence length="259" mass="29530">MLTVISPAKTLDYDTPPVTERFTLPQYLDDSQELIVQLRELSPAQISELMHLSDKLAGLNAARFGSWTPDFTPANAKQALLAFKGDVYTGLDAETLSEDDFTYAQQHLRMLSGLYGLLRPLDLMQPYRLEMGTKLANARGKDLYAFWGTRISQWLNQALTEQGDDLLLNLASNEYFSAVKRSALKGRVINVDFKDLKNGQYKIISFYAKKARGMMSRFVIQERVNDPQQLKQFDVQGYYYSAEQSKPDHLVFLRDHPAE</sequence>